<organism>
    <name type="scientific">Aliivibrio fischeri</name>
    <name type="common">Vibrio fischeri</name>
    <dbReference type="NCBI Taxonomy" id="668"/>
    <lineage>
        <taxon>Bacteria</taxon>
        <taxon>Pseudomonadati</taxon>
        <taxon>Pseudomonadota</taxon>
        <taxon>Gammaproteobacteria</taxon>
        <taxon>Vibrionales</taxon>
        <taxon>Vibrionaceae</taxon>
        <taxon>Aliivibrio</taxon>
    </lineage>
</organism>
<protein>
    <recommendedName>
        <fullName evidence="1">Acyl transferase</fullName>
        <shortName evidence="1">ACT</shortName>
        <ecNumber evidence="1">2.3.1.-</ecNumber>
    </recommendedName>
    <alternativeName>
        <fullName evidence="1">C14ACP-TE</fullName>
    </alternativeName>
    <alternativeName>
        <fullName evidence="1">Myristoyl-ACP-specific thioesterase</fullName>
    </alternativeName>
</protein>
<reference key="1">
    <citation type="submission" date="1999-07" db="EMBL/GenBank/DDBJ databases">
        <title>Vibrio fischeri Lux operon SalI digest.</title>
        <authorList>
            <person name="Knight T."/>
            <person name="Papadakis N."/>
        </authorList>
    </citation>
    <scope>NUCLEOTIDE SEQUENCE [GENOMIC DNA]</scope>
    <source>
        <strain>MJ-1</strain>
    </source>
</reference>
<feature type="chain" id="PRO_0000220194" description="Acyl transferase">
    <location>
        <begin position="1"/>
        <end position="307"/>
    </location>
</feature>
<feature type="active site" description="Charge relay system" evidence="1">
    <location>
        <position position="116"/>
    </location>
</feature>
<feature type="active site" description="Charge relay system" evidence="1">
    <location>
        <position position="213"/>
    </location>
</feature>
<feature type="active site" description="Charge relay system" evidence="1">
    <location>
        <position position="243"/>
    </location>
</feature>
<comment type="function">
    <text evidence="1">Acyl transferase is part of the fatty acid reductase system required for aldehyde biosynthesis; it produces fatty acids for the luminescent reaction.</text>
</comment>
<comment type="pathway">
    <text evidence="1">Lipid metabolism; fatty acid reduction for biolumincescence.</text>
</comment>
<comment type="similarity">
    <text evidence="1">Belongs to the LuxD family.</text>
</comment>
<gene>
    <name evidence="1" type="primary">luxD</name>
</gene>
<name>LUXD_ALIFS</name>
<accession>Q9S3Z2</accession>
<evidence type="ECO:0000255" key="1">
    <source>
        <dbReference type="HAMAP-Rule" id="MF_00774"/>
    </source>
</evidence>
<dbReference type="EC" id="2.3.1.-" evidence="1"/>
<dbReference type="EMBL" id="AF170104">
    <property type="protein sequence ID" value="AAD48476.1"/>
    <property type="molecule type" value="Genomic_DNA"/>
</dbReference>
<dbReference type="RefSeq" id="WP_080690702.1">
    <property type="nucleotide sequence ID" value="NZ_WOBB01000007.1"/>
</dbReference>
<dbReference type="SMR" id="Q9S3Z2"/>
<dbReference type="ESTHER" id="vibfi-LUXD">
    <property type="family name" value="Thioesterase_acyl-transferase"/>
</dbReference>
<dbReference type="UniPathway" id="UPA00569"/>
<dbReference type="GO" id="GO:0016747">
    <property type="term" value="F:acyltransferase activity, transferring groups other than amino-acyl groups"/>
    <property type="evidence" value="ECO:0007669"/>
    <property type="project" value="UniProtKB-UniRule"/>
</dbReference>
<dbReference type="GO" id="GO:0008218">
    <property type="term" value="P:bioluminescence"/>
    <property type="evidence" value="ECO:0000315"/>
    <property type="project" value="CACAO"/>
</dbReference>
<dbReference type="GO" id="GO:0006631">
    <property type="term" value="P:fatty acid metabolic process"/>
    <property type="evidence" value="ECO:0007669"/>
    <property type="project" value="InterPro"/>
</dbReference>
<dbReference type="FunFam" id="3.40.50.1820:FF:000541">
    <property type="entry name" value="Acyl transferase"/>
    <property type="match status" value="1"/>
</dbReference>
<dbReference type="Gene3D" id="3.40.50.1820">
    <property type="entry name" value="alpha/beta hydrolase"/>
    <property type="match status" value="1"/>
</dbReference>
<dbReference type="HAMAP" id="MF_00774">
    <property type="entry name" value="LuxD"/>
    <property type="match status" value="1"/>
</dbReference>
<dbReference type="InterPro" id="IPR029058">
    <property type="entry name" value="AB_hydrolase_fold"/>
</dbReference>
<dbReference type="InterPro" id="IPR003157">
    <property type="entry name" value="LuxD"/>
</dbReference>
<dbReference type="NCBIfam" id="NF010127">
    <property type="entry name" value="PRK13604.1"/>
    <property type="match status" value="1"/>
</dbReference>
<dbReference type="Pfam" id="PF02273">
    <property type="entry name" value="Acyl_transf_2"/>
    <property type="match status" value="1"/>
</dbReference>
<dbReference type="PIRSF" id="PIRSF009416">
    <property type="entry name" value="LuxD"/>
    <property type="match status" value="1"/>
</dbReference>
<dbReference type="SUPFAM" id="SSF53474">
    <property type="entry name" value="alpha/beta-Hydrolases"/>
    <property type="match status" value="1"/>
</dbReference>
<keyword id="KW-0012">Acyltransferase</keyword>
<keyword id="KW-0455">Luminescence</keyword>
<keyword id="KW-0808">Transferase</keyword>
<proteinExistence type="inferred from homology"/>
<sequence length="307" mass="34456">MKDESAFFTIDHIIKLDNGQSIRVWETLPKKNVPEKKHTILIASGFARRMDHFAGLAEYLSTNGFHVIRYDSLHHVGLSSGCINEFTMSIGKNSLLTVVDWLTDHGVERIGLIAASLSARIAYEVVNKIKLSFLITAVGVVNLRDTLEKALEYDYLQLPISELPEDLDFEGHNLGSEVFVTDCFKHNWDTLDSTLNSVKGLAIPFIAFTANDDSWVKQSEVIELIDSIESSNCKLYSLIGSSHDLGENLVVLRNFYQSVTKAALALDDGLLDLEIDIIEPRFEDVTSITVKERRLKNEIENELLELA</sequence>